<keyword id="KW-0238">DNA-binding</keyword>
<keyword id="KW-0945">Host-virus interaction</keyword>
<keyword id="KW-1090">Inhibition of host innate immune response by virus</keyword>
<keyword id="KW-0479">Metal-binding</keyword>
<keyword id="KW-0941">Suppressor of RNA silencing</keyword>
<keyword id="KW-0899">Viral immunoevasion</keyword>
<keyword id="KW-0862">Zinc</keyword>
<keyword id="KW-0863">Zinc-finger</keyword>
<name>VSR_CVB</name>
<comment type="function">
    <text evidence="1">Suppressor of viral-induced RNA silencing. The potential mechanism of action is based on sequestering siRNAs (By similarity).</text>
</comment>
<comment type="similarity">
    <text evidence="3">Belongs to the carlaviruses nucleic acid-binding protein family.</text>
</comment>
<protein>
    <recommendedName>
        <fullName>RNA silencing suppressor</fullName>
    </recommendedName>
    <alternativeName>
        <fullName>12.6 kDa protein</fullName>
    </alternativeName>
    <alternativeName>
        <fullName>Putative nucleic acid-binding protein</fullName>
    </alternativeName>
</protein>
<sequence length="107" mass="12576">MDVIVKMLILRKFVEQGNVCPIHLCVDIYKRAFPRSVNKGRSSYARRRRALELGRCHRCYRVYPPLFPEISRCDNRTCVPGISYNSKVRDYILWGVTEVIPHPGYNF</sequence>
<organismHost>
    <name type="scientific">Chrysanthemum morifolium</name>
    <name type="common">Florist's daisy</name>
    <name type="synonym">Dendranthema grandiflorum</name>
    <dbReference type="NCBI Taxonomy" id="41568"/>
</organismHost>
<organismHost>
    <name type="scientific">Gynura</name>
    <dbReference type="NCBI Taxonomy" id="109564"/>
</organismHost>
<evidence type="ECO:0000250" key="1"/>
<evidence type="ECO:0000255" key="2"/>
<evidence type="ECO:0000305" key="3"/>
<reference key="1">
    <citation type="journal article" date="1991" name="J. Gen. Virol.">
        <title>Nucleotide sequence and gene organization of the 3'-terminal region of chrysanthemum virus B genomic RNA.</title>
        <authorList>
            <person name="Levay K."/>
            <person name="Zavriev S."/>
        </authorList>
    </citation>
    <scope>NUCLEOTIDE SEQUENCE [GENOMIC RNA]</scope>
</reference>
<organism>
    <name type="scientific">Chrysanthemum virus B</name>
    <name type="common">CVB</name>
    <dbReference type="NCBI Taxonomy" id="12165"/>
    <lineage>
        <taxon>Viruses</taxon>
        <taxon>Riboviria</taxon>
        <taxon>Orthornavirae</taxon>
        <taxon>Kitrinoviricota</taxon>
        <taxon>Alsuviricetes</taxon>
        <taxon>Tymovirales</taxon>
        <taxon>Betaflexiviridae</taxon>
        <taxon>Quinvirinae</taxon>
        <taxon>Carlavirus</taxon>
    </lineage>
</organism>
<accession>P37992</accession>
<proteinExistence type="inferred from homology"/>
<feature type="chain" id="PRO_0000222650" description="RNA silencing suppressor">
    <location>
        <begin position="1"/>
        <end position="107"/>
    </location>
</feature>
<feature type="zinc finger region" description="C4-type" evidence="2">
    <location>
        <begin position="56"/>
        <end position="78"/>
    </location>
</feature>
<feature type="region of interest" description="Basic" evidence="1">
    <location>
        <begin position="46"/>
        <end position="49"/>
    </location>
</feature>
<dbReference type="EMBL" id="S60150">
    <property type="protein sequence ID" value="AAB20081.1"/>
    <property type="molecule type" value="Genomic_RNA"/>
</dbReference>
<dbReference type="PIR" id="JQ1251">
    <property type="entry name" value="JQ1251"/>
</dbReference>
<dbReference type="RefSeq" id="YP_001086457.1">
    <property type="nucleotide sequence ID" value="NC_009087.2"/>
</dbReference>
<dbReference type="GeneID" id="4910895"/>
<dbReference type="KEGG" id="vg:4910895"/>
<dbReference type="OrthoDB" id="28055at10239"/>
<dbReference type="GO" id="GO:0003677">
    <property type="term" value="F:DNA binding"/>
    <property type="evidence" value="ECO:0007669"/>
    <property type="project" value="UniProtKB-KW"/>
</dbReference>
<dbReference type="GO" id="GO:0008270">
    <property type="term" value="F:zinc ion binding"/>
    <property type="evidence" value="ECO:0007669"/>
    <property type="project" value="UniProtKB-KW"/>
</dbReference>
<dbReference type="GO" id="GO:0006355">
    <property type="term" value="P:regulation of DNA-templated transcription"/>
    <property type="evidence" value="ECO:0007669"/>
    <property type="project" value="InterPro"/>
</dbReference>
<dbReference type="GO" id="GO:0052170">
    <property type="term" value="P:symbiont-mediated suppression of host innate immune response"/>
    <property type="evidence" value="ECO:0007669"/>
    <property type="project" value="UniProtKB-KW"/>
</dbReference>
<dbReference type="InterPro" id="IPR002568">
    <property type="entry name" value="Carla-bd"/>
</dbReference>
<dbReference type="Pfam" id="PF01623">
    <property type="entry name" value="Carla_C4"/>
    <property type="match status" value="1"/>
</dbReference>